<feature type="transit peptide" description="Mitochondrion" evidence="5">
    <location>
        <begin position="1"/>
        <end status="unknown"/>
    </location>
</feature>
<feature type="chain" id="PRO_0000001303" description="Probable cysteine desulfurase, mitochondrial">
    <location>
        <begin status="unknown"/>
        <end position="501"/>
    </location>
</feature>
<feature type="active site" description="Cysteine persulfide intermediate" evidence="2">
    <location>
        <position position="425"/>
    </location>
</feature>
<feature type="binding site" evidence="3">
    <location>
        <begin position="172"/>
        <end position="173"/>
    </location>
    <ligand>
        <name>pyridoxal 5'-phosphate</name>
        <dbReference type="ChEBI" id="CHEBI:597326"/>
    </ligand>
</feature>
<feature type="binding site" evidence="1">
    <location>
        <position position="252"/>
    </location>
    <ligand>
        <name>pyridoxal 5'-phosphate</name>
        <dbReference type="ChEBI" id="CHEBI:597326"/>
    </ligand>
</feature>
<feature type="binding site" evidence="3">
    <location>
        <position position="280"/>
    </location>
    <ligand>
        <name>pyridoxal 5'-phosphate</name>
        <dbReference type="ChEBI" id="CHEBI:597326"/>
    </ligand>
</feature>
<feature type="binding site" evidence="3">
    <location>
        <begin position="300"/>
        <end position="302"/>
    </location>
    <ligand>
        <name>pyridoxal 5'-phosphate</name>
        <dbReference type="ChEBI" id="CHEBI:597326"/>
    </ligand>
</feature>
<feature type="binding site" evidence="3">
    <location>
        <position position="340"/>
    </location>
    <ligand>
        <name>pyridoxal 5'-phosphate</name>
        <dbReference type="ChEBI" id="CHEBI:597326"/>
    </ligand>
</feature>
<feature type="binding site" description="via persulfide group" evidence="1">
    <location>
        <position position="425"/>
    </location>
    <ligand>
        <name>[2Fe-2S] cluster</name>
        <dbReference type="ChEBI" id="CHEBI:190135"/>
    </ligand>
</feature>
<feature type="modified residue" description="N6-(pyridoxal phosphate)lysine" evidence="3">
    <location>
        <position position="303"/>
    </location>
</feature>
<evidence type="ECO:0000250" key="1">
    <source>
        <dbReference type="UniProtKB" id="O29689"/>
    </source>
</evidence>
<evidence type="ECO:0000250" key="2">
    <source>
        <dbReference type="UniProtKB" id="P0A6B7"/>
    </source>
</evidence>
<evidence type="ECO:0000250" key="3">
    <source>
        <dbReference type="UniProtKB" id="P0A6B9"/>
    </source>
</evidence>
<evidence type="ECO:0000250" key="4">
    <source>
        <dbReference type="UniProtKB" id="P25374"/>
    </source>
</evidence>
<evidence type="ECO:0000255" key="5"/>
<evidence type="ECO:0000305" key="6"/>
<evidence type="ECO:0000312" key="7">
    <source>
        <dbReference type="PomBase" id="SPBC21D10.11c"/>
    </source>
</evidence>
<comment type="function">
    <text evidence="4">Catalyzes the removal of elemental sulfur from cysteine to produce alanine. It supplies the inorganic sulfur for iron-sulfur (Fe-S) clusters. Plays a role in both tRNA-processing and mitochondrial metabolism. Involved in the 2-thio-modification of both 5-carboxymethylaminomethyl-2-thiouridine in mitochondrial tRNAs and 5-methoxycarbonylmethyl-2-thiouridine (mcm5s2U) in cytoplasmic tRNAs.</text>
</comment>
<comment type="catalytic activity">
    <reaction evidence="4">
        <text>(sulfur carrier)-H + L-cysteine = (sulfur carrier)-SH + L-alanine</text>
        <dbReference type="Rhea" id="RHEA:43892"/>
        <dbReference type="Rhea" id="RHEA-COMP:14737"/>
        <dbReference type="Rhea" id="RHEA-COMP:14739"/>
        <dbReference type="ChEBI" id="CHEBI:29917"/>
        <dbReference type="ChEBI" id="CHEBI:35235"/>
        <dbReference type="ChEBI" id="CHEBI:57972"/>
        <dbReference type="ChEBI" id="CHEBI:64428"/>
        <dbReference type="EC" id="2.8.1.7"/>
    </reaction>
</comment>
<comment type="cofactor">
    <cofactor evidence="3">
        <name>pyridoxal 5'-phosphate</name>
        <dbReference type="ChEBI" id="CHEBI:597326"/>
    </cofactor>
</comment>
<comment type="subcellular location">
    <subcellularLocation>
        <location evidence="4">Mitochondrion</location>
    </subcellularLocation>
</comment>
<comment type="similarity">
    <text evidence="6">Belongs to the class-V pyridoxal-phosphate-dependent aminotransferase family. NifS/IscS subfamily.</text>
</comment>
<proteinExistence type="inferred from homology"/>
<sequence>MSKMGSLMLSRARCLLELRSALFFVKRESQDINNVRQSLGVYGRSFMTSSRMDKPSMSNKPREQMYGLGNMTAVQEPIPENSLKTVTLDQAQTAASTVTGLHPIYMDFQATSPLDYRVLDSMLPFFTGIYGNPHSRTHAYGWEAEKAVENARQEIASVINADPREIIFTSGATESNNAILKGVARFYKSRKKHLVSVQTEHKCVLDSLRALQEEGFEVTFLPVQTNGLINLDELRDAIRPDTVCVSVMAVNNEIGVCQPLEEIGKICRQKKVFFHSDAAQGYGKIDIDVNRMNIDLMSISAHKIYGPKGIGAAYVRRRPRVRLEPLISGGGQERGLRSGTLAPSQVVGFGTAARICKEEMKYDYAHISKLSQRLIDGLLAIPYTSLNGDPKSRYPGCVNISFNYVEGESLLMGLKNIALSSGSACTSASLEPSYVLRAIGQSDENAHSSIRFGIGRFTTEAEIDYAIENVSRQVSFLRNMSPLWDLVQEGVDLSTIEWSQH</sequence>
<dbReference type="EC" id="2.8.1.7" evidence="4"/>
<dbReference type="EMBL" id="CU329671">
    <property type="protein sequence ID" value="CAA20767.2"/>
    <property type="molecule type" value="Genomic_DNA"/>
</dbReference>
<dbReference type="PIR" id="T11683">
    <property type="entry name" value="T11683"/>
</dbReference>
<dbReference type="SMR" id="O74351"/>
<dbReference type="BioGRID" id="276931">
    <property type="interactions" value="11"/>
</dbReference>
<dbReference type="FunCoup" id="O74351">
    <property type="interactions" value="621"/>
</dbReference>
<dbReference type="STRING" id="284812.O74351"/>
<dbReference type="iPTMnet" id="O74351"/>
<dbReference type="PaxDb" id="4896-SPBC21D10.11c.1"/>
<dbReference type="EnsemblFungi" id="SPBC21D10.11c.1">
    <property type="protein sequence ID" value="SPBC21D10.11c.1:pep"/>
    <property type="gene ID" value="SPBC21D10.11c"/>
</dbReference>
<dbReference type="KEGG" id="spo:2540403"/>
<dbReference type="PomBase" id="SPBC21D10.11c"/>
<dbReference type="VEuPathDB" id="FungiDB:SPBC21D10.11c"/>
<dbReference type="eggNOG" id="KOG1549">
    <property type="taxonomic scope" value="Eukaryota"/>
</dbReference>
<dbReference type="HOGENOM" id="CLU_003433_0_2_1"/>
<dbReference type="InParanoid" id="O74351"/>
<dbReference type="OMA" id="KGLYWAR"/>
<dbReference type="Reactome" id="R-SPO-1362409">
    <property type="pathway name" value="Mitochondrial iron-sulfur cluster biogenesis"/>
</dbReference>
<dbReference type="Reactome" id="R-SPO-947581">
    <property type="pathway name" value="Molybdenum cofactor biosynthesis"/>
</dbReference>
<dbReference type="Reactome" id="R-SPO-9865881">
    <property type="pathway name" value="Complex III assembly"/>
</dbReference>
<dbReference type="PRO" id="PR:O74351"/>
<dbReference type="Proteomes" id="UP000002485">
    <property type="component" value="Chromosome II"/>
</dbReference>
<dbReference type="GO" id="GO:0005829">
    <property type="term" value="C:cytosol"/>
    <property type="evidence" value="ECO:0000318"/>
    <property type="project" value="GO_Central"/>
</dbReference>
<dbReference type="GO" id="GO:0099128">
    <property type="term" value="C:mitochondrial [2Fe-2S] assembly complex"/>
    <property type="evidence" value="ECO:0000304"/>
    <property type="project" value="PomBase"/>
</dbReference>
<dbReference type="GO" id="GO:0005759">
    <property type="term" value="C:mitochondrial matrix"/>
    <property type="evidence" value="ECO:0000266"/>
    <property type="project" value="PomBase"/>
</dbReference>
<dbReference type="GO" id="GO:0005739">
    <property type="term" value="C:mitochondrion"/>
    <property type="evidence" value="ECO:0000318"/>
    <property type="project" value="GO_Central"/>
</dbReference>
<dbReference type="GO" id="GO:0005634">
    <property type="term" value="C:nucleus"/>
    <property type="evidence" value="ECO:0000318"/>
    <property type="project" value="GO_Central"/>
</dbReference>
<dbReference type="GO" id="GO:0031071">
    <property type="term" value="F:cysteine desulfurase activity"/>
    <property type="evidence" value="ECO:0000318"/>
    <property type="project" value="GO_Central"/>
</dbReference>
<dbReference type="GO" id="GO:0051536">
    <property type="term" value="F:iron-sulfur cluster binding"/>
    <property type="evidence" value="ECO:0007669"/>
    <property type="project" value="UniProtKB-KW"/>
</dbReference>
<dbReference type="GO" id="GO:0046872">
    <property type="term" value="F:metal ion binding"/>
    <property type="evidence" value="ECO:0007669"/>
    <property type="project" value="UniProtKB-KW"/>
</dbReference>
<dbReference type="GO" id="GO:0030170">
    <property type="term" value="F:pyridoxal phosphate binding"/>
    <property type="evidence" value="ECO:0007669"/>
    <property type="project" value="InterPro"/>
</dbReference>
<dbReference type="GO" id="GO:0044571">
    <property type="term" value="P:[2Fe-2S] cluster assembly"/>
    <property type="evidence" value="ECO:0000305"/>
    <property type="project" value="PomBase"/>
</dbReference>
<dbReference type="GO" id="GO:0016226">
    <property type="term" value="P:iron-sulfur cluster assembly"/>
    <property type="evidence" value="ECO:0000318"/>
    <property type="project" value="GO_Central"/>
</dbReference>
<dbReference type="GO" id="GO:0002143">
    <property type="term" value="P:tRNA wobble position uridine thiolation"/>
    <property type="evidence" value="ECO:0000314"/>
    <property type="project" value="PomBase"/>
</dbReference>
<dbReference type="FunFam" id="3.40.640.10:FF:000003">
    <property type="entry name" value="Cysteine desulfurase IscS"/>
    <property type="match status" value="1"/>
</dbReference>
<dbReference type="FunFam" id="3.90.1150.10:FF:000002">
    <property type="entry name" value="Cysteine desulfurase IscS"/>
    <property type="match status" value="1"/>
</dbReference>
<dbReference type="Gene3D" id="3.90.1150.10">
    <property type="entry name" value="Aspartate Aminotransferase, domain 1"/>
    <property type="match status" value="1"/>
</dbReference>
<dbReference type="Gene3D" id="3.40.640.10">
    <property type="entry name" value="Type I PLP-dependent aspartate aminotransferase-like (Major domain)"/>
    <property type="match status" value="1"/>
</dbReference>
<dbReference type="HAMAP" id="MF_00331">
    <property type="entry name" value="Cys_desulf_IscS"/>
    <property type="match status" value="1"/>
</dbReference>
<dbReference type="InterPro" id="IPR000192">
    <property type="entry name" value="Aminotrans_V_dom"/>
</dbReference>
<dbReference type="InterPro" id="IPR020578">
    <property type="entry name" value="Aminotrans_V_PyrdxlP_BS"/>
</dbReference>
<dbReference type="InterPro" id="IPR010240">
    <property type="entry name" value="Cys_deSase_IscS"/>
</dbReference>
<dbReference type="InterPro" id="IPR015424">
    <property type="entry name" value="PyrdxlP-dep_Trfase"/>
</dbReference>
<dbReference type="InterPro" id="IPR015421">
    <property type="entry name" value="PyrdxlP-dep_Trfase_major"/>
</dbReference>
<dbReference type="InterPro" id="IPR015422">
    <property type="entry name" value="PyrdxlP-dep_Trfase_small"/>
</dbReference>
<dbReference type="NCBIfam" id="TIGR02006">
    <property type="entry name" value="IscS"/>
    <property type="match status" value="1"/>
</dbReference>
<dbReference type="NCBIfam" id="NF010611">
    <property type="entry name" value="PRK14012.1"/>
    <property type="match status" value="1"/>
</dbReference>
<dbReference type="PANTHER" id="PTHR11601:SF34">
    <property type="entry name" value="CYSTEINE DESULFURASE"/>
    <property type="match status" value="1"/>
</dbReference>
<dbReference type="PANTHER" id="PTHR11601">
    <property type="entry name" value="CYSTEINE DESULFURYLASE FAMILY MEMBER"/>
    <property type="match status" value="1"/>
</dbReference>
<dbReference type="Pfam" id="PF00266">
    <property type="entry name" value="Aminotran_5"/>
    <property type="match status" value="1"/>
</dbReference>
<dbReference type="SUPFAM" id="SSF53383">
    <property type="entry name" value="PLP-dependent transferases"/>
    <property type="match status" value="1"/>
</dbReference>
<dbReference type="PROSITE" id="PS00595">
    <property type="entry name" value="AA_TRANSFER_CLASS_5"/>
    <property type="match status" value="1"/>
</dbReference>
<organism>
    <name type="scientific">Schizosaccharomyces pombe (strain 972 / ATCC 24843)</name>
    <name type="common">Fission yeast</name>
    <dbReference type="NCBI Taxonomy" id="284812"/>
    <lineage>
        <taxon>Eukaryota</taxon>
        <taxon>Fungi</taxon>
        <taxon>Dikarya</taxon>
        <taxon>Ascomycota</taxon>
        <taxon>Taphrinomycotina</taxon>
        <taxon>Schizosaccharomycetes</taxon>
        <taxon>Schizosaccharomycetales</taxon>
        <taxon>Schizosaccharomycetaceae</taxon>
        <taxon>Schizosaccharomyces</taxon>
    </lineage>
</organism>
<protein>
    <recommendedName>
        <fullName evidence="4">Probable cysteine desulfurase, mitochondrial</fullName>
        <ecNumber evidence="4">2.8.1.7</ecNumber>
    </recommendedName>
</protein>
<reference key="1">
    <citation type="journal article" date="2002" name="Nature">
        <title>The genome sequence of Schizosaccharomyces pombe.</title>
        <authorList>
            <person name="Wood V."/>
            <person name="Gwilliam R."/>
            <person name="Rajandream M.A."/>
            <person name="Lyne M.H."/>
            <person name="Lyne R."/>
            <person name="Stewart A."/>
            <person name="Sgouros J.G."/>
            <person name="Peat N."/>
            <person name="Hayles J."/>
            <person name="Baker S.G."/>
            <person name="Basham D."/>
            <person name="Bowman S."/>
            <person name="Brooks K."/>
            <person name="Brown D."/>
            <person name="Brown S."/>
            <person name="Chillingworth T."/>
            <person name="Churcher C.M."/>
            <person name="Collins M."/>
            <person name="Connor R."/>
            <person name="Cronin A."/>
            <person name="Davis P."/>
            <person name="Feltwell T."/>
            <person name="Fraser A."/>
            <person name="Gentles S."/>
            <person name="Goble A."/>
            <person name="Hamlin N."/>
            <person name="Harris D.E."/>
            <person name="Hidalgo J."/>
            <person name="Hodgson G."/>
            <person name="Holroyd S."/>
            <person name="Hornsby T."/>
            <person name="Howarth S."/>
            <person name="Huckle E.J."/>
            <person name="Hunt S."/>
            <person name="Jagels K."/>
            <person name="James K.D."/>
            <person name="Jones L."/>
            <person name="Jones M."/>
            <person name="Leather S."/>
            <person name="McDonald S."/>
            <person name="McLean J."/>
            <person name="Mooney P."/>
            <person name="Moule S."/>
            <person name="Mungall K.L."/>
            <person name="Murphy L.D."/>
            <person name="Niblett D."/>
            <person name="Odell C."/>
            <person name="Oliver K."/>
            <person name="O'Neil S."/>
            <person name="Pearson D."/>
            <person name="Quail M.A."/>
            <person name="Rabbinowitsch E."/>
            <person name="Rutherford K.M."/>
            <person name="Rutter S."/>
            <person name="Saunders D."/>
            <person name="Seeger K."/>
            <person name="Sharp S."/>
            <person name="Skelton J."/>
            <person name="Simmonds M.N."/>
            <person name="Squares R."/>
            <person name="Squares S."/>
            <person name="Stevens K."/>
            <person name="Taylor K."/>
            <person name="Taylor R.G."/>
            <person name="Tivey A."/>
            <person name="Walsh S.V."/>
            <person name="Warren T."/>
            <person name="Whitehead S."/>
            <person name="Woodward J.R."/>
            <person name="Volckaert G."/>
            <person name="Aert R."/>
            <person name="Robben J."/>
            <person name="Grymonprez B."/>
            <person name="Weltjens I."/>
            <person name="Vanstreels E."/>
            <person name="Rieger M."/>
            <person name="Schaefer M."/>
            <person name="Mueller-Auer S."/>
            <person name="Gabel C."/>
            <person name="Fuchs M."/>
            <person name="Duesterhoeft A."/>
            <person name="Fritzc C."/>
            <person name="Holzer E."/>
            <person name="Moestl D."/>
            <person name="Hilbert H."/>
            <person name="Borzym K."/>
            <person name="Langer I."/>
            <person name="Beck A."/>
            <person name="Lehrach H."/>
            <person name="Reinhardt R."/>
            <person name="Pohl T.M."/>
            <person name="Eger P."/>
            <person name="Zimmermann W."/>
            <person name="Wedler H."/>
            <person name="Wambutt R."/>
            <person name="Purnelle B."/>
            <person name="Goffeau A."/>
            <person name="Cadieu E."/>
            <person name="Dreano S."/>
            <person name="Gloux S."/>
            <person name="Lelaure V."/>
            <person name="Mottier S."/>
            <person name="Galibert F."/>
            <person name="Aves S.J."/>
            <person name="Xiang Z."/>
            <person name="Hunt C."/>
            <person name="Moore K."/>
            <person name="Hurst S.M."/>
            <person name="Lucas M."/>
            <person name="Rochet M."/>
            <person name="Gaillardin C."/>
            <person name="Tallada V.A."/>
            <person name="Garzon A."/>
            <person name="Thode G."/>
            <person name="Daga R.R."/>
            <person name="Cruzado L."/>
            <person name="Jimenez J."/>
            <person name="Sanchez M."/>
            <person name="del Rey F."/>
            <person name="Benito J."/>
            <person name="Dominguez A."/>
            <person name="Revuelta J.L."/>
            <person name="Moreno S."/>
            <person name="Armstrong J."/>
            <person name="Forsburg S.L."/>
            <person name="Cerutti L."/>
            <person name="Lowe T."/>
            <person name="McCombie W.R."/>
            <person name="Paulsen I."/>
            <person name="Potashkin J."/>
            <person name="Shpakovski G.V."/>
            <person name="Ussery D."/>
            <person name="Barrell B.G."/>
            <person name="Nurse P."/>
        </authorList>
    </citation>
    <scope>NUCLEOTIDE SEQUENCE [LARGE SCALE GENOMIC DNA]</scope>
    <source>
        <strain>972 / ATCC 24843</strain>
    </source>
</reference>
<reference key="2">
    <citation type="journal article" date="2011" name="Science">
        <title>Comparative functional genomics of the fission yeasts.</title>
        <authorList>
            <person name="Rhind N."/>
            <person name="Chen Z."/>
            <person name="Yassour M."/>
            <person name="Thompson D.A."/>
            <person name="Haas B.J."/>
            <person name="Habib N."/>
            <person name="Wapinski I."/>
            <person name="Roy S."/>
            <person name="Lin M.F."/>
            <person name="Heiman D.I."/>
            <person name="Young S.K."/>
            <person name="Furuya K."/>
            <person name="Guo Y."/>
            <person name="Pidoux A."/>
            <person name="Chen H.M."/>
            <person name="Robbertse B."/>
            <person name="Goldberg J.M."/>
            <person name="Aoki K."/>
            <person name="Bayne E.H."/>
            <person name="Berlin A.M."/>
            <person name="Desjardins C.A."/>
            <person name="Dobbs E."/>
            <person name="Dukaj L."/>
            <person name="Fan L."/>
            <person name="FitzGerald M.G."/>
            <person name="French C."/>
            <person name="Gujja S."/>
            <person name="Hansen K."/>
            <person name="Keifenheim D."/>
            <person name="Levin J.Z."/>
            <person name="Mosher R.A."/>
            <person name="Mueller C.A."/>
            <person name="Pfiffner J."/>
            <person name="Priest M."/>
            <person name="Russ C."/>
            <person name="Smialowska A."/>
            <person name="Swoboda P."/>
            <person name="Sykes S.M."/>
            <person name="Vaughn M."/>
            <person name="Vengrova S."/>
            <person name="Yoder R."/>
            <person name="Zeng Q."/>
            <person name="Allshire R."/>
            <person name="Baulcombe D."/>
            <person name="Birren B.W."/>
            <person name="Brown W."/>
            <person name="Ekwall K."/>
            <person name="Kellis M."/>
            <person name="Leatherwood J."/>
            <person name="Levin H."/>
            <person name="Margalit H."/>
            <person name="Martienssen R."/>
            <person name="Nieduszynski C.A."/>
            <person name="Spatafora J.W."/>
            <person name="Friedman N."/>
            <person name="Dalgaard J.Z."/>
            <person name="Baumann P."/>
            <person name="Niki H."/>
            <person name="Regev A."/>
            <person name="Nusbaum C."/>
        </authorList>
    </citation>
    <scope>REVISION OF GENE MODEL</scope>
</reference>
<gene>
    <name evidence="7" type="ORF">SPBC21D10.11c</name>
</gene>
<keyword id="KW-0408">Iron</keyword>
<keyword id="KW-0411">Iron-sulfur</keyword>
<keyword id="KW-0479">Metal-binding</keyword>
<keyword id="KW-0496">Mitochondrion</keyword>
<keyword id="KW-0663">Pyridoxal phosphate</keyword>
<keyword id="KW-1185">Reference proteome</keyword>
<keyword id="KW-0808">Transferase</keyword>
<keyword id="KW-0809">Transit peptide</keyword>
<accession>O74351</accession>
<name>NFS1_SCHPO</name>